<sequence>MINAKKLMKMAKKWQQRAALHRKRISFQRSSVFTSSSSTVEKGCFVVYTADKIRFAFPISYLSNSVVQELLKISEEDFGLPTEGPITLPFDSAFLEYLVKLIQRRMDEDTEKALLLSISSARCSFQPQEQQCSTTQQLLVF</sequence>
<feature type="chain" id="PRO_0000433075" description="Auxin-responsive protein SAUR63">
    <location>
        <begin position="1"/>
        <end position="141"/>
    </location>
</feature>
<accession>F4I1H5</accession>
<accession>Q9C7Q7</accession>
<proteinExistence type="evidence at transcript level"/>
<dbReference type="EMBL" id="AC068667">
    <property type="protein sequence ID" value="AAG51746.1"/>
    <property type="status" value="ALT_INIT"/>
    <property type="molecule type" value="Genomic_DNA"/>
</dbReference>
<dbReference type="EMBL" id="CP002684">
    <property type="protein sequence ID" value="AEE31089.1"/>
    <property type="molecule type" value="Genomic_DNA"/>
</dbReference>
<dbReference type="PIR" id="B86417">
    <property type="entry name" value="B86417"/>
</dbReference>
<dbReference type="RefSeq" id="NP_174237.2">
    <property type="nucleotide sequence ID" value="NM_102684.2"/>
</dbReference>
<dbReference type="FunCoup" id="F4I1H5">
    <property type="interactions" value="48"/>
</dbReference>
<dbReference type="STRING" id="3702.F4I1H5"/>
<dbReference type="PaxDb" id="3702-AT1G29440.1"/>
<dbReference type="EnsemblPlants" id="AT1G29440.1">
    <property type="protein sequence ID" value="AT1G29440.1"/>
    <property type="gene ID" value="AT1G29440"/>
</dbReference>
<dbReference type="GeneID" id="839820"/>
<dbReference type="Gramene" id="AT1G29440.1">
    <property type="protein sequence ID" value="AT1G29440.1"/>
    <property type="gene ID" value="AT1G29440"/>
</dbReference>
<dbReference type="KEGG" id="ath:AT1G29440"/>
<dbReference type="Araport" id="AT1G29440"/>
<dbReference type="TAIR" id="AT1G29440">
    <property type="gene designation" value="SAUR63"/>
</dbReference>
<dbReference type="eggNOG" id="ENOG502S4GQ">
    <property type="taxonomic scope" value="Eukaryota"/>
</dbReference>
<dbReference type="HOGENOM" id="CLU_090137_1_1_1"/>
<dbReference type="InParanoid" id="F4I1H5"/>
<dbReference type="OMA" id="RYLNDCI"/>
<dbReference type="PRO" id="PR:F4I1H5"/>
<dbReference type="Proteomes" id="UP000006548">
    <property type="component" value="Chromosome 1"/>
</dbReference>
<dbReference type="ExpressionAtlas" id="F4I1H5">
    <property type="expression patterns" value="baseline and differential"/>
</dbReference>
<dbReference type="GO" id="GO:0005886">
    <property type="term" value="C:plasma membrane"/>
    <property type="evidence" value="ECO:0007669"/>
    <property type="project" value="UniProtKB-SubCell"/>
</dbReference>
<dbReference type="GO" id="GO:0009926">
    <property type="term" value="P:auxin polar transport"/>
    <property type="evidence" value="ECO:0000314"/>
    <property type="project" value="TAIR"/>
</dbReference>
<dbReference type="GO" id="GO:0009734">
    <property type="term" value="P:auxin-activated signaling pathway"/>
    <property type="evidence" value="ECO:0007669"/>
    <property type="project" value="UniProtKB-KW"/>
</dbReference>
<dbReference type="GO" id="GO:0080086">
    <property type="term" value="P:stamen filament development"/>
    <property type="evidence" value="ECO:0000315"/>
    <property type="project" value="TAIR"/>
</dbReference>
<dbReference type="InterPro" id="IPR003676">
    <property type="entry name" value="SAUR_fam"/>
</dbReference>
<dbReference type="PANTHER" id="PTHR31175">
    <property type="entry name" value="AUXIN-RESPONSIVE FAMILY PROTEIN"/>
    <property type="match status" value="1"/>
</dbReference>
<dbReference type="PANTHER" id="PTHR31175:SF99">
    <property type="entry name" value="AUXIN-RESPONSIVE PROTEIN SAUR61-RELATED"/>
    <property type="match status" value="1"/>
</dbReference>
<dbReference type="Pfam" id="PF02519">
    <property type="entry name" value="Auxin_inducible"/>
    <property type="match status" value="1"/>
</dbReference>
<organism>
    <name type="scientific">Arabidopsis thaliana</name>
    <name type="common">Mouse-ear cress</name>
    <dbReference type="NCBI Taxonomy" id="3702"/>
    <lineage>
        <taxon>Eukaryota</taxon>
        <taxon>Viridiplantae</taxon>
        <taxon>Streptophyta</taxon>
        <taxon>Embryophyta</taxon>
        <taxon>Tracheophyta</taxon>
        <taxon>Spermatophyta</taxon>
        <taxon>Magnoliopsida</taxon>
        <taxon>eudicotyledons</taxon>
        <taxon>Gunneridae</taxon>
        <taxon>Pentapetalae</taxon>
        <taxon>rosids</taxon>
        <taxon>malvids</taxon>
        <taxon>Brassicales</taxon>
        <taxon>Brassicaceae</taxon>
        <taxon>Camelineae</taxon>
        <taxon>Arabidopsis</taxon>
    </lineage>
</organism>
<evidence type="ECO:0000269" key="1">
    <source>
    </source>
</evidence>
<evidence type="ECO:0000303" key="2">
    <source>
    </source>
</evidence>
<evidence type="ECO:0000305" key="3"/>
<evidence type="ECO:0000305" key="4">
    <source>
    </source>
</evidence>
<evidence type="ECO:0000312" key="5">
    <source>
        <dbReference type="Araport" id="AT1G29440"/>
    </source>
</evidence>
<evidence type="ECO:0000312" key="6">
    <source>
        <dbReference type="EMBL" id="AAG51746.1"/>
    </source>
</evidence>
<reference key="1">
    <citation type="journal article" date="2000" name="Nature">
        <title>Sequence and analysis of chromosome 1 of the plant Arabidopsis thaliana.</title>
        <authorList>
            <person name="Theologis A."/>
            <person name="Ecker J.R."/>
            <person name="Palm C.J."/>
            <person name="Federspiel N.A."/>
            <person name="Kaul S."/>
            <person name="White O."/>
            <person name="Alonso J."/>
            <person name="Altafi H."/>
            <person name="Araujo R."/>
            <person name="Bowman C.L."/>
            <person name="Brooks S.Y."/>
            <person name="Buehler E."/>
            <person name="Chan A."/>
            <person name="Chao Q."/>
            <person name="Chen H."/>
            <person name="Cheuk R.F."/>
            <person name="Chin C.W."/>
            <person name="Chung M.K."/>
            <person name="Conn L."/>
            <person name="Conway A.B."/>
            <person name="Conway A.R."/>
            <person name="Creasy T.H."/>
            <person name="Dewar K."/>
            <person name="Dunn P."/>
            <person name="Etgu P."/>
            <person name="Feldblyum T.V."/>
            <person name="Feng J.-D."/>
            <person name="Fong B."/>
            <person name="Fujii C.Y."/>
            <person name="Gill J.E."/>
            <person name="Goldsmith A.D."/>
            <person name="Haas B."/>
            <person name="Hansen N.F."/>
            <person name="Hughes B."/>
            <person name="Huizar L."/>
            <person name="Hunter J.L."/>
            <person name="Jenkins J."/>
            <person name="Johnson-Hopson C."/>
            <person name="Khan S."/>
            <person name="Khaykin E."/>
            <person name="Kim C.J."/>
            <person name="Koo H.L."/>
            <person name="Kremenetskaia I."/>
            <person name="Kurtz D.B."/>
            <person name="Kwan A."/>
            <person name="Lam B."/>
            <person name="Langin-Hooper S."/>
            <person name="Lee A."/>
            <person name="Lee J.M."/>
            <person name="Lenz C.A."/>
            <person name="Li J.H."/>
            <person name="Li Y.-P."/>
            <person name="Lin X."/>
            <person name="Liu S.X."/>
            <person name="Liu Z.A."/>
            <person name="Luros J.S."/>
            <person name="Maiti R."/>
            <person name="Marziali A."/>
            <person name="Militscher J."/>
            <person name="Miranda M."/>
            <person name="Nguyen M."/>
            <person name="Nierman W.C."/>
            <person name="Osborne B.I."/>
            <person name="Pai G."/>
            <person name="Peterson J."/>
            <person name="Pham P.K."/>
            <person name="Rizzo M."/>
            <person name="Rooney T."/>
            <person name="Rowley D."/>
            <person name="Sakano H."/>
            <person name="Salzberg S.L."/>
            <person name="Schwartz J.R."/>
            <person name="Shinn P."/>
            <person name="Southwick A.M."/>
            <person name="Sun H."/>
            <person name="Tallon L.J."/>
            <person name="Tambunga G."/>
            <person name="Toriumi M.J."/>
            <person name="Town C.D."/>
            <person name="Utterback T."/>
            <person name="Van Aken S."/>
            <person name="Vaysberg M."/>
            <person name="Vysotskaia V.S."/>
            <person name="Walker M."/>
            <person name="Wu D."/>
            <person name="Yu G."/>
            <person name="Fraser C.M."/>
            <person name="Venter J.C."/>
            <person name="Davis R.W."/>
        </authorList>
    </citation>
    <scope>NUCLEOTIDE SEQUENCE [LARGE SCALE GENOMIC DNA]</scope>
    <source>
        <strain>cv. Columbia</strain>
    </source>
</reference>
<reference key="2">
    <citation type="journal article" date="2017" name="Plant J.">
        <title>Araport11: a complete reannotation of the Arabidopsis thaliana reference genome.</title>
        <authorList>
            <person name="Cheng C.Y."/>
            <person name="Krishnakumar V."/>
            <person name="Chan A.P."/>
            <person name="Thibaud-Nissen F."/>
            <person name="Schobel S."/>
            <person name="Town C.D."/>
        </authorList>
    </citation>
    <scope>GENOME REANNOTATION</scope>
    <source>
        <strain>cv. Columbia</strain>
    </source>
</reference>
<reference key="3">
    <citation type="journal article" date="2002" name="Plant Mol. Biol.">
        <title>Auxin-responsive gene expression: genes, promoters and regulatory factors.</title>
        <authorList>
            <person name="Hagen G."/>
            <person name="Guilfoyle T.J."/>
        </authorList>
    </citation>
    <scope>GENE FAMILY</scope>
    <scope>NOMENCLATURE</scope>
</reference>
<reference key="4">
    <citation type="journal article" date="2012" name="Plant J.">
        <title>Arabidopsis SMALL AUXIN UP RNA63 promotes hypocotyl and stamen filament elongation.</title>
        <authorList>
            <person name="Chae K."/>
            <person name="Isaacs C.G."/>
            <person name="Reeves P.H."/>
            <person name="Maloney G.S."/>
            <person name="Muday G.K."/>
            <person name="Nagpal P."/>
            <person name="Reed J.W."/>
        </authorList>
    </citation>
    <scope>FUNCTION</scope>
    <scope>SUBCELLULAR LOCATION</scope>
    <scope>TISSUE SPECIFICITY</scope>
</reference>
<keyword id="KW-0927">Auxin signaling pathway</keyword>
<keyword id="KW-1003">Cell membrane</keyword>
<keyword id="KW-0217">Developmental protein</keyword>
<keyword id="KW-0341">Growth regulation</keyword>
<keyword id="KW-0472">Membrane</keyword>
<keyword id="KW-1185">Reference proteome</keyword>
<name>SAU63_ARATH</name>
<protein>
    <recommendedName>
        <fullName evidence="3">Auxin-responsive protein SAUR63</fullName>
    </recommendedName>
    <alternativeName>
        <fullName evidence="2">Protein SMALL AUXIN UP RNA 63</fullName>
    </alternativeName>
</protein>
<comment type="function">
    <text evidence="1">May promote auxin-stimulated organ elongation, such as hypocotyls, stamen filaments and petals.</text>
</comment>
<comment type="subcellular location">
    <subcellularLocation>
        <location evidence="1">Cell membrane</location>
        <topology evidence="4">Peripheral membrane protein</topology>
    </subcellularLocation>
    <text evidence="1">Localizes in a punctate pattern at the plasma membrane.</text>
</comment>
<comment type="tissue specificity">
    <text evidence="1">Expressed in hypocotyls, cotyledons, petioles, young rosette leaves, apical portion of inflorescence stems, stamen filaments and petals.</text>
</comment>
<comment type="miscellaneous">
    <text evidence="1">Plants over-expressing SAUR63 display elongated hypocotyls, twisted inflorescence stems, and increased length of stamen filaments and petals.</text>
</comment>
<comment type="similarity">
    <text evidence="3">Belongs to the ARG7 family.</text>
</comment>
<comment type="sequence caution" evidence="3">
    <conflict type="erroneous initiation">
        <sequence resource="EMBL-CDS" id="AAG51746"/>
    </conflict>
    <text>Truncated N-terminus.</text>
</comment>
<gene>
    <name evidence="2" type="primary">SAUR63</name>
    <name evidence="5" type="ordered locus">At1g29440</name>
    <name evidence="6" type="ORF">F15D2.3</name>
</gene>